<reference key="1">
    <citation type="journal article" date="2006" name="J. Bacteriol.">
        <title>Genome sequence of Aeromonas hydrophila ATCC 7966T: jack of all trades.</title>
        <authorList>
            <person name="Seshadri R."/>
            <person name="Joseph S.W."/>
            <person name="Chopra A.K."/>
            <person name="Sha J."/>
            <person name="Shaw J."/>
            <person name="Graf J."/>
            <person name="Haft D.H."/>
            <person name="Wu M."/>
            <person name="Ren Q."/>
            <person name="Rosovitz M.J."/>
            <person name="Madupu R."/>
            <person name="Tallon L."/>
            <person name="Kim M."/>
            <person name="Jin S."/>
            <person name="Vuong H."/>
            <person name="Stine O.C."/>
            <person name="Ali A."/>
            <person name="Horneman A.J."/>
            <person name="Heidelberg J.F."/>
        </authorList>
    </citation>
    <scope>NUCLEOTIDE SEQUENCE [LARGE SCALE GENOMIC DNA]</scope>
    <source>
        <strain>ATCC 7966 / DSM 30187 / BCRC 13018 / CCUG 14551 / JCM 1027 / KCTC 2358 / NCIMB 9240 / NCTC 8049</strain>
    </source>
</reference>
<organism>
    <name type="scientific">Aeromonas hydrophila subsp. hydrophila (strain ATCC 7966 / DSM 30187 / BCRC 13018 / CCUG 14551 / JCM 1027 / KCTC 2358 / NCIMB 9240 / NCTC 8049)</name>
    <dbReference type="NCBI Taxonomy" id="380703"/>
    <lineage>
        <taxon>Bacteria</taxon>
        <taxon>Pseudomonadati</taxon>
        <taxon>Pseudomonadota</taxon>
        <taxon>Gammaproteobacteria</taxon>
        <taxon>Aeromonadales</taxon>
        <taxon>Aeromonadaceae</taxon>
        <taxon>Aeromonas</taxon>
    </lineage>
</organism>
<dbReference type="EC" id="3.4.11.4" evidence="1"/>
<dbReference type="EMBL" id="CP000462">
    <property type="protein sequence ID" value="ABK39770.1"/>
    <property type="molecule type" value="Genomic_DNA"/>
</dbReference>
<dbReference type="RefSeq" id="WP_011705507.1">
    <property type="nucleotide sequence ID" value="NC_008570.1"/>
</dbReference>
<dbReference type="RefSeq" id="YP_856148.1">
    <property type="nucleotide sequence ID" value="NC_008570.1"/>
</dbReference>
<dbReference type="SMR" id="A0KIP7"/>
<dbReference type="STRING" id="380703.AHA_1612"/>
<dbReference type="MEROPS" id="M20.003"/>
<dbReference type="EnsemblBacteria" id="ABK39770">
    <property type="protein sequence ID" value="ABK39770"/>
    <property type="gene ID" value="AHA_1612"/>
</dbReference>
<dbReference type="GeneID" id="4488364"/>
<dbReference type="KEGG" id="aha:AHA_1612"/>
<dbReference type="PATRIC" id="fig|380703.7.peg.1624"/>
<dbReference type="eggNOG" id="COG2195">
    <property type="taxonomic scope" value="Bacteria"/>
</dbReference>
<dbReference type="HOGENOM" id="CLU_053676_0_0_6"/>
<dbReference type="OrthoDB" id="9804934at2"/>
<dbReference type="Proteomes" id="UP000000756">
    <property type="component" value="Chromosome"/>
</dbReference>
<dbReference type="GO" id="GO:0005829">
    <property type="term" value="C:cytosol"/>
    <property type="evidence" value="ECO:0007669"/>
    <property type="project" value="TreeGrafter"/>
</dbReference>
<dbReference type="GO" id="GO:0008237">
    <property type="term" value="F:metallopeptidase activity"/>
    <property type="evidence" value="ECO:0007669"/>
    <property type="project" value="UniProtKB-KW"/>
</dbReference>
<dbReference type="GO" id="GO:0045148">
    <property type="term" value="F:tripeptide aminopeptidase activity"/>
    <property type="evidence" value="ECO:0007669"/>
    <property type="project" value="UniProtKB-UniRule"/>
</dbReference>
<dbReference type="GO" id="GO:0008270">
    <property type="term" value="F:zinc ion binding"/>
    <property type="evidence" value="ECO:0007669"/>
    <property type="project" value="UniProtKB-UniRule"/>
</dbReference>
<dbReference type="GO" id="GO:0043171">
    <property type="term" value="P:peptide catabolic process"/>
    <property type="evidence" value="ECO:0007669"/>
    <property type="project" value="UniProtKB-UniRule"/>
</dbReference>
<dbReference type="GO" id="GO:0006508">
    <property type="term" value="P:proteolysis"/>
    <property type="evidence" value="ECO:0007669"/>
    <property type="project" value="UniProtKB-UniRule"/>
</dbReference>
<dbReference type="CDD" id="cd03892">
    <property type="entry name" value="M20_peptT"/>
    <property type="match status" value="1"/>
</dbReference>
<dbReference type="Gene3D" id="3.30.70.360">
    <property type="match status" value="1"/>
</dbReference>
<dbReference type="Gene3D" id="3.40.630.10">
    <property type="entry name" value="Zn peptidases"/>
    <property type="match status" value="1"/>
</dbReference>
<dbReference type="HAMAP" id="MF_00550">
    <property type="entry name" value="Aminopeptidase_M20"/>
    <property type="match status" value="1"/>
</dbReference>
<dbReference type="InterPro" id="IPR001261">
    <property type="entry name" value="ArgE/DapE_CS"/>
</dbReference>
<dbReference type="InterPro" id="IPR036264">
    <property type="entry name" value="Bact_exopeptidase_dim_dom"/>
</dbReference>
<dbReference type="InterPro" id="IPR002933">
    <property type="entry name" value="Peptidase_M20"/>
</dbReference>
<dbReference type="InterPro" id="IPR011650">
    <property type="entry name" value="Peptidase_M20_dimer"/>
</dbReference>
<dbReference type="InterPro" id="IPR010161">
    <property type="entry name" value="Peptidase_M20B"/>
</dbReference>
<dbReference type="NCBIfam" id="TIGR01882">
    <property type="entry name" value="peptidase-T"/>
    <property type="match status" value="1"/>
</dbReference>
<dbReference type="NCBIfam" id="NF003976">
    <property type="entry name" value="PRK05469.1"/>
    <property type="match status" value="1"/>
</dbReference>
<dbReference type="NCBIfam" id="NF009920">
    <property type="entry name" value="PRK13381.1"/>
    <property type="match status" value="1"/>
</dbReference>
<dbReference type="PANTHER" id="PTHR42994">
    <property type="entry name" value="PEPTIDASE T"/>
    <property type="match status" value="1"/>
</dbReference>
<dbReference type="PANTHER" id="PTHR42994:SF1">
    <property type="entry name" value="PEPTIDASE T"/>
    <property type="match status" value="1"/>
</dbReference>
<dbReference type="Pfam" id="PF07687">
    <property type="entry name" value="M20_dimer"/>
    <property type="match status" value="1"/>
</dbReference>
<dbReference type="Pfam" id="PF01546">
    <property type="entry name" value="Peptidase_M20"/>
    <property type="match status" value="1"/>
</dbReference>
<dbReference type="PIRSF" id="PIRSF037215">
    <property type="entry name" value="Peptidase_M20B"/>
    <property type="match status" value="1"/>
</dbReference>
<dbReference type="SUPFAM" id="SSF55031">
    <property type="entry name" value="Bacterial exopeptidase dimerisation domain"/>
    <property type="match status" value="1"/>
</dbReference>
<dbReference type="SUPFAM" id="SSF53187">
    <property type="entry name" value="Zn-dependent exopeptidases"/>
    <property type="match status" value="1"/>
</dbReference>
<dbReference type="PROSITE" id="PS00758">
    <property type="entry name" value="ARGE_DAPE_CPG2_1"/>
    <property type="match status" value="1"/>
</dbReference>
<dbReference type="PROSITE" id="PS00759">
    <property type="entry name" value="ARGE_DAPE_CPG2_2"/>
    <property type="match status" value="1"/>
</dbReference>
<gene>
    <name evidence="1" type="primary">pepT</name>
    <name type="ordered locus">AHA_1612</name>
</gene>
<keyword id="KW-0031">Aminopeptidase</keyword>
<keyword id="KW-0963">Cytoplasm</keyword>
<keyword id="KW-0378">Hydrolase</keyword>
<keyword id="KW-0479">Metal-binding</keyword>
<keyword id="KW-0482">Metalloprotease</keyword>
<keyword id="KW-0645">Protease</keyword>
<keyword id="KW-1185">Reference proteome</keyword>
<keyword id="KW-0862">Zinc</keyword>
<feature type="chain" id="PRO_1000129017" description="Peptidase T">
    <location>
        <begin position="1"/>
        <end position="407"/>
    </location>
</feature>
<feature type="active site" evidence="1">
    <location>
        <position position="79"/>
    </location>
</feature>
<feature type="active site" description="Proton acceptor" evidence="1">
    <location>
        <position position="172"/>
    </location>
</feature>
<feature type="binding site" evidence="1">
    <location>
        <position position="77"/>
    </location>
    <ligand>
        <name>Zn(2+)</name>
        <dbReference type="ChEBI" id="CHEBI:29105"/>
        <label>1</label>
    </ligand>
</feature>
<feature type="binding site" evidence="1">
    <location>
        <position position="138"/>
    </location>
    <ligand>
        <name>Zn(2+)</name>
        <dbReference type="ChEBI" id="CHEBI:29105"/>
        <label>1</label>
    </ligand>
</feature>
<feature type="binding site" evidence="1">
    <location>
        <position position="138"/>
    </location>
    <ligand>
        <name>Zn(2+)</name>
        <dbReference type="ChEBI" id="CHEBI:29105"/>
        <label>2</label>
    </ligand>
</feature>
<feature type="binding site" evidence="1">
    <location>
        <position position="173"/>
    </location>
    <ligand>
        <name>Zn(2+)</name>
        <dbReference type="ChEBI" id="CHEBI:29105"/>
        <label>2</label>
    </ligand>
</feature>
<feature type="binding site" evidence="1">
    <location>
        <position position="195"/>
    </location>
    <ligand>
        <name>Zn(2+)</name>
        <dbReference type="ChEBI" id="CHEBI:29105"/>
        <label>1</label>
    </ligand>
</feature>
<feature type="binding site" evidence="1">
    <location>
        <position position="377"/>
    </location>
    <ligand>
        <name>Zn(2+)</name>
        <dbReference type="ChEBI" id="CHEBI:29105"/>
        <label>2</label>
    </ligand>
</feature>
<comment type="function">
    <text evidence="1">Cleaves the N-terminal amino acid of tripeptides.</text>
</comment>
<comment type="catalytic activity">
    <reaction evidence="1">
        <text>Release of the N-terminal residue from a tripeptide.</text>
        <dbReference type="EC" id="3.4.11.4"/>
    </reaction>
</comment>
<comment type="cofactor">
    <cofactor evidence="1">
        <name>Zn(2+)</name>
        <dbReference type="ChEBI" id="CHEBI:29105"/>
    </cofactor>
    <text evidence="1">Binds 2 Zn(2+) ions per subunit.</text>
</comment>
<comment type="subcellular location">
    <subcellularLocation>
        <location evidence="1">Cytoplasm</location>
    </subcellularLocation>
</comment>
<comment type="similarity">
    <text evidence="1">Belongs to the peptidase M20B family.</text>
</comment>
<accession>A0KIP7</accession>
<protein>
    <recommendedName>
        <fullName evidence="1">Peptidase T</fullName>
        <ecNumber evidence="1">3.4.11.4</ecNumber>
    </recommendedName>
    <alternativeName>
        <fullName evidence="1">Aminotripeptidase</fullName>
        <shortName evidence="1">Tripeptidase</shortName>
    </alternativeName>
    <alternativeName>
        <fullName evidence="1">Tripeptide aminopeptidase</fullName>
    </alternativeName>
</protein>
<name>PEPT_AERHH</name>
<sequence length="407" mass="44840">MDTLLERFLRYVTFHTRSDATNPACPSSEGQLVFARALCDEMQQMGLSRVTLDEYGYLTACLPGNQPDAPAIGLIAHMDTADYEAAHVVPQIIENYQGGDICLGKGDEVLAIRDYRFLKNYLGQDLITTDGSTLLGADDKAGIAEILTAIDHLLAHPEIPRGDVWVGFTPDEEIGRGADRFPLDRFPAKWAYTVDGGELGELEYENFNAAGATVRFIGNNVHPGTAKGSMINSQTLAARFHAAMPTEQTPEATDGYQGFFHLAQMNGTVEETCLHYIIRDFDDEGFAARKAQLKERVASLQLEAPRARIELTLTDSYRNMRSQIEPHMHIVELAKAAMQAADVTPRIKPIRGGTDGARLSFMGLPCPNLFTGGHNFHGKHEFIPLQSMEKAVTTLVELVRLTSAWRG</sequence>
<proteinExistence type="inferred from homology"/>
<evidence type="ECO:0000255" key="1">
    <source>
        <dbReference type="HAMAP-Rule" id="MF_00550"/>
    </source>
</evidence>